<comment type="function">
    <text evidence="6">PKS-NRPS hybrid synthetase; part of the gene cluster that mediates the biosynthesis of pyrophen and campyrone B, which represent a class of fungal amino acid-derived alpha-pyrone natural products (PubMed:32159958). The first step of pyrophen biosynthesis is catalyzed by the PKS-NRPS hybrid synthetase ATPKS that uptakes and condensates L-phenylalanine and malonyl-CoA in order to produce desmethyldesacetylpyrophen (PubMed:32159958). Although the A domain does not discriminate between 2 enantiomeric phenylalanines, the downstream KS domain must play a gate keeping role to stereoselectively accept the L-phenylalanyl-S-phosphopantetheine (Ppant)-T domain intermediate for chain elongation (PubMed:32159958). The resulting amino acid derived diketide is off-loaded through lactonization to yield the alpha-pyrone intermediate desmethyldesacetylpyrophen (PubMed:32159958). The cluster-specific O-methyltransferase (OMT) then methylates desmethyldesacetylpyrophen to desacetylpyrophen, which is further acetylated to pyrophen by an endogenous yet unidentified N-acetyltransferase (PubMed:32159958). ATPKS has relaxed substrate specificity to activate and extend branched-chain amino acid L-leucine to produce small amounts of campyrone B (PubMed:32159958).</text>
</comment>
<comment type="pathway">
    <text evidence="6">Secondary metabolite biosynthesis.</text>
</comment>
<comment type="domain">
    <text evidence="9">The architecture of ATPKS is the following one: adenylation (A), phosphopantetheine-binding/thiolation (T), beta-ketoacyl synthase (KS), malonyl-CoA:ACP transacylase (MAT), ketoreductase (KR) domain, and thioester reductase (TE) domains.</text>
</comment>
<comment type="similarity">
    <text evidence="8">In the C-terminal section; belongs to the NRP synthetase family.</text>
</comment>
<name>ATPKS_ASPNA</name>
<organism>
    <name type="scientific">Aspergillus niger (strain ATCC 1015 / CBS 113.46 / FGSC A1144 / LSHB Ac4 / NCTC 3858a / NRRL 328 / USDA 3528.7)</name>
    <dbReference type="NCBI Taxonomy" id="380704"/>
    <lineage>
        <taxon>Eukaryota</taxon>
        <taxon>Fungi</taxon>
        <taxon>Dikarya</taxon>
        <taxon>Ascomycota</taxon>
        <taxon>Pezizomycotina</taxon>
        <taxon>Eurotiomycetes</taxon>
        <taxon>Eurotiomycetidae</taxon>
        <taxon>Eurotiales</taxon>
        <taxon>Aspergillaceae</taxon>
        <taxon>Aspergillus</taxon>
        <taxon>Aspergillus subgen. Circumdati</taxon>
    </lineage>
</organism>
<accession>G3XNF4</accession>
<proteinExistence type="evidence at protein level"/>
<feature type="chain" id="PRO_0000452989" description="PKS-NRPS hybrid synthetase ATPKS">
    <location>
        <begin position="1"/>
        <end position="1854"/>
    </location>
</feature>
<feature type="domain" description="Carrier 1" evidence="3">
    <location>
        <begin position="523"/>
        <end position="598"/>
    </location>
</feature>
<feature type="domain" description="Ketosynthase family 3 (KS3)" evidence="4">
    <location>
        <begin position="617"/>
        <end position="1049"/>
    </location>
</feature>
<feature type="domain" description="Carrier 2" evidence="3">
    <location>
        <begin position="1776"/>
        <end position="1851"/>
    </location>
</feature>
<feature type="region of interest" description="Adenylation (A) domain" evidence="1 2">
    <location>
        <begin position="24"/>
        <end position="423"/>
    </location>
</feature>
<feature type="region of interest" description="Malonyl-CoA:ACP transacylase (MAT) domain" evidence="1 2">
    <location>
        <begin position="1162"/>
        <end position="1496"/>
    </location>
</feature>
<feature type="region of interest" description="Disordered" evidence="5">
    <location>
        <begin position="1536"/>
        <end position="1556"/>
    </location>
</feature>
<feature type="compositionally biased region" description="Low complexity" evidence="5">
    <location>
        <begin position="1537"/>
        <end position="1555"/>
    </location>
</feature>
<feature type="active site" description="For beta-ketoacyl synthase activity" evidence="4">
    <location>
        <position position="791"/>
    </location>
</feature>
<feature type="active site" description="For beta-ketoacyl synthase activity" evidence="4">
    <location>
        <position position="926"/>
    </location>
</feature>
<feature type="active site" description="For beta-ketoacyl synthase activity" evidence="4">
    <location>
        <position position="967"/>
    </location>
</feature>
<feature type="modified residue" description="O-(pantetheine 4'-phosphoryl)serine" evidence="3">
    <location>
        <position position="558"/>
    </location>
</feature>
<feature type="modified residue" description="O-(pantetheine 4'-phosphoryl)serine" evidence="3">
    <location>
        <position position="1811"/>
    </location>
</feature>
<reference key="1">
    <citation type="journal article" date="2011" name="Genome Res.">
        <title>Comparative genomics of citric-acid-producing Aspergillus niger ATCC 1015 versus enzyme-producing CBS 513.88.</title>
        <authorList>
            <person name="Andersen M.R."/>
            <person name="Salazar M.P."/>
            <person name="Schaap P.J."/>
            <person name="van de Vondervoort P.J.I."/>
            <person name="Culley D."/>
            <person name="Thykaer J."/>
            <person name="Frisvad J.C."/>
            <person name="Nielsen K.F."/>
            <person name="Albang R."/>
            <person name="Albermann K."/>
            <person name="Berka R.M."/>
            <person name="Braus G.H."/>
            <person name="Braus-Stromeyer S.A."/>
            <person name="Corrochano L.M."/>
            <person name="Dai Z."/>
            <person name="van Dijck P.W.M."/>
            <person name="Hofmann G."/>
            <person name="Lasure L.L."/>
            <person name="Magnuson J.K."/>
            <person name="Menke H."/>
            <person name="Meijer M."/>
            <person name="Meijer S.L."/>
            <person name="Nielsen J.B."/>
            <person name="Nielsen M.L."/>
            <person name="van Ooyen A.J.J."/>
            <person name="Pel H.J."/>
            <person name="Poulsen L."/>
            <person name="Samson R.A."/>
            <person name="Stam H."/>
            <person name="Tsang A."/>
            <person name="van den Brink J.M."/>
            <person name="Atkins A."/>
            <person name="Aerts A."/>
            <person name="Shapiro H."/>
            <person name="Pangilinan J."/>
            <person name="Salamov A."/>
            <person name="Lou Y."/>
            <person name="Lindquist E."/>
            <person name="Lucas S."/>
            <person name="Grimwood J."/>
            <person name="Grigoriev I.V."/>
            <person name="Kubicek C.P."/>
            <person name="Martinez D."/>
            <person name="van Peij N.N.M.E."/>
            <person name="Roubos J.A."/>
            <person name="Nielsen J."/>
            <person name="Baker S.E."/>
        </authorList>
    </citation>
    <scope>NUCLEOTIDE SEQUENCE [LARGE SCALE GENOMIC DNA]</scope>
    <source>
        <strain>ATCC 1015 / CBS 113.46 / FGSC A1144 / LSHB Ac4 / NCTC 3858a / NRRL 328 / USDA 3528.7</strain>
    </source>
</reference>
<reference key="2">
    <citation type="journal article" date="2020" name="J. Nat. Prod.">
        <title>Biosynthesis of Amino Acid Derived alpha-Pyrones by an NRPS-NRPKS Hybrid Megasynthetase in Fungi.</title>
        <authorList>
            <person name="Hai Y."/>
            <person name="Huang A."/>
            <person name="Tang Y."/>
        </authorList>
    </citation>
    <scope>FUNCTION</scope>
    <scope>DOMAIN</scope>
    <scope>CATALYTIC ACTIVITY</scope>
    <scope>SUBSTRATE SPECIFICITY</scope>
    <scope>PATHWAY</scope>
</reference>
<keyword id="KW-0436">Ligase</keyword>
<keyword id="KW-0489">Methyltransferase</keyword>
<keyword id="KW-0511">Multifunctional enzyme</keyword>
<keyword id="KW-0596">Phosphopantetheine</keyword>
<keyword id="KW-0597">Phosphoprotein</keyword>
<keyword id="KW-0808">Transferase</keyword>
<sequence>MVPEDDQNLTDDPSKLGHNVVSLFDQTQTRYSPKAAIVCGEHTLTYGALASDSDRLACLLLSRGISRGHVVALALDRTPDLIMFILGVLKAGATYVPVDPALPPERVNQMLDDEALRLVIVSPVSTKGGAGTGRYDYGNKAVCCTTSELQDQMRYQADKRPAVDIQPDDIAYILYTSGSTGKPKGVEIHHAAICNYALSVHQRPGCTDQDRVLFKSTISFDMAAFEIYVPLLCGATVVQAQAHDIRDPRALMHLIDRHSVTFSVATPTILQMMLDSGWCGTPGFSKLVTGGEALSPRLAERLTACVEEVWNLYGPTETTASVAAWKVQVGEDILIGTPNPNTRLYVLDADLQPVPVGSTGELYISGAGVARGYRNNPERTKAAFLPDPFWEGHTMYKSGDLACFLDSRRLAVIGRADTQIKIRGQRIDPGDVEASITAHADIANAVVVNRDERLVAYCIRKPGVGSAEVPLAKLLRPWLEDRLPGYMVPSFFVEVDRFPSTLNGKVDLRALPDPISTITPAKIPASTLTQQLLAIWTDVLGHGQIGMQDSFFHIGGNSASIIQIQTKLEKLLGRPVPVPKLYEHFTIANLAAYLSDQTQTNEVTEETKNPAGNDTTGEDIAVISMACRLPGDIHTPEELWKALISGTDAVTRVPEERWDADAIYDPDPEARGKSYSTGGGFVRDAMDFDAQFFGISPREARAIDPAQTMILETCWEGFERAGYGTKSLRGSQTGVFIGTGNSSVDDGQLSAAGTEKFEGHLGLGTAPSSLSGRVAYALGLEGPTMTLDAGCAASLVATHVACSALRQGECDMAVAGGVTFLPSPGLHIEFSRIRVASPDGRSRPFSADAAGMGLGEGASAVVLKRLSDAQRDNDHIHAIIRGSAVNHGGRGASMTAPSGPGQKRVVRAALAAARLKPYDIDYVEAHGTGTRLGDPVEASALAEVFSSSRDDITGPLRIGSSKSNIAHTQAAAGLAGLIKVALAMQHTMLPQTLHSSQPSPLIDWVGGKLQLLQRPMAWLPRTNDPTAPRRAGINSFGLSGTNAHAIIEEPPRAHSNANGADDDDNDDNARLPLPLPFLLSAYTSEALRQQAQKLCNHLSSATAQTKLSDVSYSLATTRTHFPRRIILAAQDKTELMGRLASIIDNGVPATADNNKTARVAMLFSGQGTERARMGKGLAERHLVFRNTVSHIAELFESVLEKPLLDVMWAEPESEAASLLRRTDYAQPAIFTLQVALWRLWQSWGVQPAVVLGHSVGEIAAAHVAGIMNLADACRLVAARGKLMHALPESGSMVALEAGVDEVTSAIEQLSARDRVSIASINTPTQVVASGEMDVIDKLAAYFEAQNRSSKILKTSRAFHSHHLDESMLALLRAVAETIVFQEQTLPIVSTVTGKLAEPGQLSSADYWVRQARNPVLFAEGMQTLADQGANCFVELGPASTLCGMGASCLDGDLSQTSKVAGREGAKNLVWLHSLNPKSDDALVIHNSLSDLHIRKVEIDWAAFFKDIGGRRIQLPTYAFQRHRYWLDGLRPIYSDKSSGQPSGQSPSGCPQPTGQIQVGWHTIDASSQYSNSTWGLLCPASDAPWMSPVKEALLHAGKQPVTVNQLAEAKAMSGVLCFWESDSEDDMISKASEQLQTVSRMKFSPWVVWVTRGAVGAGNMGEASLWGVMRSARVKYPQLCLRIVDLEGDVNIATATKLCSILMMSTEPECVVLGERVLVPRMQFQMQAQVQEVQKHSKLCVNGQETTNGATAAADPNGTDSFENKIRMAGPEERAMMLQGLVRGITAKALGVATAEEVDMHQGFMDVGVGSLGAIQMRKELSAQTGVKLPANLTRVYPDPISLSDALQKQVEGQ</sequence>
<protein>
    <recommendedName>
        <fullName evidence="7">PKS-NRPS hybrid synthetase ATPKS</fullName>
        <ecNumber evidence="6">2.3.1.-</ecNumber>
    </recommendedName>
    <alternativeName>
        <fullName evidence="7">Pyrophen biosynthesis cluster protein ATPKS</fullName>
    </alternativeName>
</protein>
<evidence type="ECO:0000250" key="1">
    <source>
        <dbReference type="UniProtKB" id="E9F8M3"/>
    </source>
</evidence>
<evidence type="ECO:0000255" key="2"/>
<evidence type="ECO:0000255" key="3">
    <source>
        <dbReference type="PROSITE-ProRule" id="PRU00258"/>
    </source>
</evidence>
<evidence type="ECO:0000255" key="4">
    <source>
        <dbReference type="PROSITE-ProRule" id="PRU01348"/>
    </source>
</evidence>
<evidence type="ECO:0000256" key="5">
    <source>
        <dbReference type="SAM" id="MobiDB-lite"/>
    </source>
</evidence>
<evidence type="ECO:0000269" key="6">
    <source>
    </source>
</evidence>
<evidence type="ECO:0000303" key="7">
    <source>
    </source>
</evidence>
<evidence type="ECO:0000305" key="8"/>
<evidence type="ECO:0000305" key="9">
    <source>
    </source>
</evidence>
<dbReference type="EC" id="2.3.1.-" evidence="6"/>
<dbReference type="EMBL" id="ACJE01000002">
    <property type="protein sequence ID" value="EHA27898.1"/>
    <property type="molecule type" value="Genomic_DNA"/>
</dbReference>
<dbReference type="SMR" id="G3XNF4"/>
<dbReference type="STRING" id="380704.G3XNF4"/>
<dbReference type="VEuPathDB" id="FungiDB:ASPNIDRAFT2_1115863"/>
<dbReference type="HOGENOM" id="CLU_000022_1_2_1"/>
<dbReference type="OrthoDB" id="46440at5052"/>
<dbReference type="Proteomes" id="UP000009038">
    <property type="component" value="Unassembled WGS sequence"/>
</dbReference>
<dbReference type="GO" id="GO:0004312">
    <property type="term" value="F:fatty acid synthase activity"/>
    <property type="evidence" value="ECO:0007669"/>
    <property type="project" value="TreeGrafter"/>
</dbReference>
<dbReference type="GO" id="GO:0016874">
    <property type="term" value="F:ligase activity"/>
    <property type="evidence" value="ECO:0007669"/>
    <property type="project" value="UniProtKB-KW"/>
</dbReference>
<dbReference type="GO" id="GO:0008168">
    <property type="term" value="F:methyltransferase activity"/>
    <property type="evidence" value="ECO:0007669"/>
    <property type="project" value="UniProtKB-KW"/>
</dbReference>
<dbReference type="GO" id="GO:0031177">
    <property type="term" value="F:phosphopantetheine binding"/>
    <property type="evidence" value="ECO:0007669"/>
    <property type="project" value="InterPro"/>
</dbReference>
<dbReference type="GO" id="GO:0006633">
    <property type="term" value="P:fatty acid biosynthetic process"/>
    <property type="evidence" value="ECO:0007669"/>
    <property type="project" value="TreeGrafter"/>
</dbReference>
<dbReference type="GO" id="GO:0032259">
    <property type="term" value="P:methylation"/>
    <property type="evidence" value="ECO:0007669"/>
    <property type="project" value="UniProtKB-KW"/>
</dbReference>
<dbReference type="CDD" id="cd05930">
    <property type="entry name" value="A_NRPS"/>
    <property type="match status" value="1"/>
</dbReference>
<dbReference type="CDD" id="cd00833">
    <property type="entry name" value="PKS"/>
    <property type="match status" value="1"/>
</dbReference>
<dbReference type="FunFam" id="3.40.50.980:FF:000001">
    <property type="entry name" value="Non-ribosomal peptide synthetase"/>
    <property type="match status" value="1"/>
</dbReference>
<dbReference type="FunFam" id="3.40.47.10:FF:000019">
    <property type="entry name" value="Polyketide synthase type I"/>
    <property type="match status" value="1"/>
</dbReference>
<dbReference type="Gene3D" id="3.30.300.30">
    <property type="match status" value="1"/>
</dbReference>
<dbReference type="Gene3D" id="3.30.70.3290">
    <property type="match status" value="1"/>
</dbReference>
<dbReference type="Gene3D" id="3.40.47.10">
    <property type="match status" value="1"/>
</dbReference>
<dbReference type="Gene3D" id="3.40.50.980">
    <property type="match status" value="2"/>
</dbReference>
<dbReference type="Gene3D" id="1.10.1200.10">
    <property type="entry name" value="ACP-like"/>
    <property type="match status" value="2"/>
</dbReference>
<dbReference type="Gene3D" id="2.30.38.10">
    <property type="entry name" value="Luciferase, Domain 3"/>
    <property type="match status" value="1"/>
</dbReference>
<dbReference type="Gene3D" id="3.40.366.10">
    <property type="entry name" value="Malonyl-Coenzyme A Acyl Carrier Protein, domain 2"/>
    <property type="match status" value="1"/>
</dbReference>
<dbReference type="Gene3D" id="3.40.50.720">
    <property type="entry name" value="NAD(P)-binding Rossmann-like Domain"/>
    <property type="match status" value="1"/>
</dbReference>
<dbReference type="InterPro" id="IPR010071">
    <property type="entry name" value="AA_adenyl_dom"/>
</dbReference>
<dbReference type="InterPro" id="IPR001227">
    <property type="entry name" value="Ac_transferase_dom_sf"/>
</dbReference>
<dbReference type="InterPro" id="IPR036736">
    <property type="entry name" value="ACP-like_sf"/>
</dbReference>
<dbReference type="InterPro" id="IPR014043">
    <property type="entry name" value="Acyl_transferase_dom"/>
</dbReference>
<dbReference type="InterPro" id="IPR016035">
    <property type="entry name" value="Acyl_Trfase/lysoPLipase"/>
</dbReference>
<dbReference type="InterPro" id="IPR025110">
    <property type="entry name" value="AMP-bd_C"/>
</dbReference>
<dbReference type="InterPro" id="IPR045851">
    <property type="entry name" value="AMP-bd_C_sf"/>
</dbReference>
<dbReference type="InterPro" id="IPR020845">
    <property type="entry name" value="AMP-binding_CS"/>
</dbReference>
<dbReference type="InterPro" id="IPR000873">
    <property type="entry name" value="AMP-dep_synth/lig_dom"/>
</dbReference>
<dbReference type="InterPro" id="IPR014031">
    <property type="entry name" value="Ketoacyl_synth_C"/>
</dbReference>
<dbReference type="InterPro" id="IPR014030">
    <property type="entry name" value="Ketoacyl_synth_N"/>
</dbReference>
<dbReference type="InterPro" id="IPR016036">
    <property type="entry name" value="Malonyl_transacylase_ACP-bd"/>
</dbReference>
<dbReference type="InterPro" id="IPR036291">
    <property type="entry name" value="NAD(P)-bd_dom_sf"/>
</dbReference>
<dbReference type="InterPro" id="IPR032821">
    <property type="entry name" value="PKS_assoc"/>
</dbReference>
<dbReference type="InterPro" id="IPR020841">
    <property type="entry name" value="PKS_Beta-ketoAc_synthase_dom"/>
</dbReference>
<dbReference type="InterPro" id="IPR050091">
    <property type="entry name" value="PKS_NRPS_Biosynth_Enz"/>
</dbReference>
<dbReference type="InterPro" id="IPR020806">
    <property type="entry name" value="PKS_PP-bd"/>
</dbReference>
<dbReference type="InterPro" id="IPR009081">
    <property type="entry name" value="PP-bd_ACP"/>
</dbReference>
<dbReference type="InterPro" id="IPR016039">
    <property type="entry name" value="Thiolase-like"/>
</dbReference>
<dbReference type="NCBIfam" id="TIGR01733">
    <property type="entry name" value="AA-adenyl-dom"/>
    <property type="match status" value="1"/>
</dbReference>
<dbReference type="PANTHER" id="PTHR43775">
    <property type="entry name" value="FATTY ACID SYNTHASE"/>
    <property type="match status" value="1"/>
</dbReference>
<dbReference type="PANTHER" id="PTHR43775:SF37">
    <property type="entry name" value="SI:DKEY-61P9.11"/>
    <property type="match status" value="1"/>
</dbReference>
<dbReference type="Pfam" id="PF00698">
    <property type="entry name" value="Acyl_transf_1"/>
    <property type="match status" value="1"/>
</dbReference>
<dbReference type="Pfam" id="PF00501">
    <property type="entry name" value="AMP-binding"/>
    <property type="match status" value="1"/>
</dbReference>
<dbReference type="Pfam" id="PF13193">
    <property type="entry name" value="AMP-binding_C"/>
    <property type="match status" value="1"/>
</dbReference>
<dbReference type="Pfam" id="PF16197">
    <property type="entry name" value="KAsynt_C_assoc"/>
    <property type="match status" value="1"/>
</dbReference>
<dbReference type="Pfam" id="PF00109">
    <property type="entry name" value="ketoacyl-synt"/>
    <property type="match status" value="1"/>
</dbReference>
<dbReference type="Pfam" id="PF02801">
    <property type="entry name" value="Ketoacyl-synt_C"/>
    <property type="match status" value="1"/>
</dbReference>
<dbReference type="Pfam" id="PF00550">
    <property type="entry name" value="PP-binding"/>
    <property type="match status" value="2"/>
</dbReference>
<dbReference type="SMART" id="SM00827">
    <property type="entry name" value="PKS_AT"/>
    <property type="match status" value="1"/>
</dbReference>
<dbReference type="SMART" id="SM00825">
    <property type="entry name" value="PKS_KS"/>
    <property type="match status" value="1"/>
</dbReference>
<dbReference type="SMART" id="SM00823">
    <property type="entry name" value="PKS_PP"/>
    <property type="match status" value="2"/>
</dbReference>
<dbReference type="SUPFAM" id="SSF56801">
    <property type="entry name" value="Acetyl-CoA synthetase-like"/>
    <property type="match status" value="1"/>
</dbReference>
<dbReference type="SUPFAM" id="SSF47336">
    <property type="entry name" value="ACP-like"/>
    <property type="match status" value="2"/>
</dbReference>
<dbReference type="SUPFAM" id="SSF52151">
    <property type="entry name" value="FabD/lysophospholipase-like"/>
    <property type="match status" value="1"/>
</dbReference>
<dbReference type="SUPFAM" id="SSF51735">
    <property type="entry name" value="NAD(P)-binding Rossmann-fold domains"/>
    <property type="match status" value="1"/>
</dbReference>
<dbReference type="SUPFAM" id="SSF55048">
    <property type="entry name" value="Probable ACP-binding domain of malonyl-CoA ACP transacylase"/>
    <property type="match status" value="1"/>
</dbReference>
<dbReference type="SUPFAM" id="SSF53901">
    <property type="entry name" value="Thiolase-like"/>
    <property type="match status" value="1"/>
</dbReference>
<dbReference type="PROSITE" id="PS00455">
    <property type="entry name" value="AMP_BINDING"/>
    <property type="match status" value="1"/>
</dbReference>
<dbReference type="PROSITE" id="PS50075">
    <property type="entry name" value="CARRIER"/>
    <property type="match status" value="2"/>
</dbReference>
<dbReference type="PROSITE" id="PS52004">
    <property type="entry name" value="KS3_2"/>
    <property type="match status" value="1"/>
</dbReference>
<gene>
    <name evidence="7" type="primary">ATPKS</name>
    <name type="ORF">ASPNIDRAFT_41846</name>
</gene>